<comment type="function">
    <text evidence="1">Catalyzes the conversion of uracil and 5-phospho-alpha-D-ribose 1-diphosphate (PRPP) to UMP and diphosphate.</text>
</comment>
<comment type="catalytic activity">
    <reaction evidence="1">
        <text>UMP + diphosphate = 5-phospho-alpha-D-ribose 1-diphosphate + uracil</text>
        <dbReference type="Rhea" id="RHEA:13017"/>
        <dbReference type="ChEBI" id="CHEBI:17568"/>
        <dbReference type="ChEBI" id="CHEBI:33019"/>
        <dbReference type="ChEBI" id="CHEBI:57865"/>
        <dbReference type="ChEBI" id="CHEBI:58017"/>
        <dbReference type="EC" id="2.4.2.9"/>
    </reaction>
</comment>
<comment type="cofactor">
    <cofactor evidence="1">
        <name>Mg(2+)</name>
        <dbReference type="ChEBI" id="CHEBI:18420"/>
    </cofactor>
    <text evidence="1">Binds 1 Mg(2+) ion per subunit. The magnesium is bound as Mg-PRPP.</text>
</comment>
<comment type="activity regulation">
    <text evidence="1">Allosterically activated by GTP.</text>
</comment>
<comment type="pathway">
    <text evidence="1">Pyrimidine metabolism; UMP biosynthesis via salvage pathway; UMP from uracil: step 1/1.</text>
</comment>
<comment type="similarity">
    <text evidence="1">Belongs to the UPRTase family.</text>
</comment>
<dbReference type="EC" id="2.4.2.9" evidence="1"/>
<dbReference type="EMBL" id="AM263198">
    <property type="protein sequence ID" value="CAK21905.1"/>
    <property type="molecule type" value="Genomic_DNA"/>
</dbReference>
<dbReference type="RefSeq" id="WP_003723470.1">
    <property type="nucleotide sequence ID" value="NC_008555.1"/>
</dbReference>
<dbReference type="SMR" id="A0ALM3"/>
<dbReference type="STRING" id="386043.lwe2487"/>
<dbReference type="GeneID" id="61190406"/>
<dbReference type="KEGG" id="lwe:lwe2487"/>
<dbReference type="eggNOG" id="COG0035">
    <property type="taxonomic scope" value="Bacteria"/>
</dbReference>
<dbReference type="HOGENOM" id="CLU_067096_2_2_9"/>
<dbReference type="OrthoDB" id="9781675at2"/>
<dbReference type="UniPathway" id="UPA00574">
    <property type="reaction ID" value="UER00636"/>
</dbReference>
<dbReference type="Proteomes" id="UP000000779">
    <property type="component" value="Chromosome"/>
</dbReference>
<dbReference type="GO" id="GO:0005525">
    <property type="term" value="F:GTP binding"/>
    <property type="evidence" value="ECO:0007669"/>
    <property type="project" value="UniProtKB-KW"/>
</dbReference>
<dbReference type="GO" id="GO:0000287">
    <property type="term" value="F:magnesium ion binding"/>
    <property type="evidence" value="ECO:0007669"/>
    <property type="project" value="UniProtKB-UniRule"/>
</dbReference>
<dbReference type="GO" id="GO:0004845">
    <property type="term" value="F:uracil phosphoribosyltransferase activity"/>
    <property type="evidence" value="ECO:0007669"/>
    <property type="project" value="UniProtKB-UniRule"/>
</dbReference>
<dbReference type="GO" id="GO:0044206">
    <property type="term" value="P:UMP salvage"/>
    <property type="evidence" value="ECO:0007669"/>
    <property type="project" value="UniProtKB-UniRule"/>
</dbReference>
<dbReference type="GO" id="GO:0006223">
    <property type="term" value="P:uracil salvage"/>
    <property type="evidence" value="ECO:0007669"/>
    <property type="project" value="InterPro"/>
</dbReference>
<dbReference type="CDD" id="cd06223">
    <property type="entry name" value="PRTases_typeI"/>
    <property type="match status" value="1"/>
</dbReference>
<dbReference type="FunFam" id="3.40.50.2020:FF:000003">
    <property type="entry name" value="Uracil phosphoribosyltransferase"/>
    <property type="match status" value="1"/>
</dbReference>
<dbReference type="Gene3D" id="3.40.50.2020">
    <property type="match status" value="1"/>
</dbReference>
<dbReference type="HAMAP" id="MF_01218_B">
    <property type="entry name" value="Upp_B"/>
    <property type="match status" value="1"/>
</dbReference>
<dbReference type="InterPro" id="IPR000836">
    <property type="entry name" value="PRibTrfase_dom"/>
</dbReference>
<dbReference type="InterPro" id="IPR029057">
    <property type="entry name" value="PRTase-like"/>
</dbReference>
<dbReference type="InterPro" id="IPR034332">
    <property type="entry name" value="Upp_B"/>
</dbReference>
<dbReference type="InterPro" id="IPR050054">
    <property type="entry name" value="UPRTase/APRTase"/>
</dbReference>
<dbReference type="InterPro" id="IPR005765">
    <property type="entry name" value="Ura_phspho_trans"/>
</dbReference>
<dbReference type="NCBIfam" id="NF001097">
    <property type="entry name" value="PRK00129.1"/>
    <property type="match status" value="1"/>
</dbReference>
<dbReference type="NCBIfam" id="TIGR01091">
    <property type="entry name" value="upp"/>
    <property type="match status" value="1"/>
</dbReference>
<dbReference type="PANTHER" id="PTHR32315">
    <property type="entry name" value="ADENINE PHOSPHORIBOSYLTRANSFERASE"/>
    <property type="match status" value="1"/>
</dbReference>
<dbReference type="PANTHER" id="PTHR32315:SF4">
    <property type="entry name" value="URACIL PHOSPHORIBOSYLTRANSFERASE, CHLOROPLASTIC"/>
    <property type="match status" value="1"/>
</dbReference>
<dbReference type="Pfam" id="PF14681">
    <property type="entry name" value="UPRTase"/>
    <property type="match status" value="1"/>
</dbReference>
<dbReference type="SUPFAM" id="SSF53271">
    <property type="entry name" value="PRTase-like"/>
    <property type="match status" value="1"/>
</dbReference>
<keyword id="KW-0021">Allosteric enzyme</keyword>
<keyword id="KW-0328">Glycosyltransferase</keyword>
<keyword id="KW-0342">GTP-binding</keyword>
<keyword id="KW-0460">Magnesium</keyword>
<keyword id="KW-0547">Nucleotide-binding</keyword>
<keyword id="KW-0808">Transferase</keyword>
<evidence type="ECO:0000255" key="1">
    <source>
        <dbReference type="HAMAP-Rule" id="MF_01218"/>
    </source>
</evidence>
<accession>A0ALM3</accession>
<reference key="1">
    <citation type="journal article" date="2006" name="J. Bacteriol.">
        <title>Whole-genome sequence of Listeria welshimeri reveals common steps in genome reduction with Listeria innocua as compared to Listeria monocytogenes.</title>
        <authorList>
            <person name="Hain T."/>
            <person name="Steinweg C."/>
            <person name="Kuenne C.T."/>
            <person name="Billion A."/>
            <person name="Ghai R."/>
            <person name="Chatterjee S.S."/>
            <person name="Domann E."/>
            <person name="Kaerst U."/>
            <person name="Goesmann A."/>
            <person name="Bekel T."/>
            <person name="Bartels D."/>
            <person name="Kaiser O."/>
            <person name="Meyer F."/>
            <person name="Puehler A."/>
            <person name="Weisshaar B."/>
            <person name="Wehland J."/>
            <person name="Liang C."/>
            <person name="Dandekar T."/>
            <person name="Lampidis R."/>
            <person name="Kreft J."/>
            <person name="Goebel W."/>
            <person name="Chakraborty T."/>
        </authorList>
    </citation>
    <scope>NUCLEOTIDE SEQUENCE [LARGE SCALE GENOMIC DNA]</scope>
    <source>
        <strain>ATCC 35897 / DSM 20650 / CCUG 15529 / CIP 8149 / NCTC 11857 / SLCC 5334 / V8</strain>
    </source>
</reference>
<protein>
    <recommendedName>
        <fullName evidence="1">Uracil phosphoribosyltransferase</fullName>
        <ecNumber evidence="1">2.4.2.9</ecNumber>
    </recommendedName>
    <alternativeName>
        <fullName evidence="1">UMP pyrophosphorylase</fullName>
    </alternativeName>
    <alternativeName>
        <fullName evidence="1">UPRTase</fullName>
    </alternativeName>
</protein>
<gene>
    <name evidence="1" type="primary">upp</name>
    <name type="ordered locus">lwe2487</name>
</gene>
<sequence>MANVHVINHPLVQHKLTIIRDKNTGTKAFRELVDEVATLMAYEITRDMELEDIQVETPLQTTTAKTLTGKKLGIVPILRAGLGMQDGILKLIPAAKVGHVGLYRDHDTLEPVEYFVKLPSDVEERLFIVVDPMLATGGSAIMAIDCLKKRGARNMKFMCLVAAPEGVKALQDAHPDVEIYVAGLDEKLDENGYIRPGLGDAGDRLFGTK</sequence>
<feature type="chain" id="PRO_1000053737" description="Uracil phosphoribosyltransferase">
    <location>
        <begin position="1"/>
        <end position="209"/>
    </location>
</feature>
<feature type="binding site" evidence="1">
    <location>
        <position position="79"/>
    </location>
    <ligand>
        <name>5-phospho-alpha-D-ribose 1-diphosphate</name>
        <dbReference type="ChEBI" id="CHEBI:58017"/>
    </ligand>
</feature>
<feature type="binding site" evidence="1">
    <location>
        <position position="104"/>
    </location>
    <ligand>
        <name>5-phospho-alpha-D-ribose 1-diphosphate</name>
        <dbReference type="ChEBI" id="CHEBI:58017"/>
    </ligand>
</feature>
<feature type="binding site" evidence="1">
    <location>
        <begin position="131"/>
        <end position="139"/>
    </location>
    <ligand>
        <name>5-phospho-alpha-D-ribose 1-diphosphate</name>
        <dbReference type="ChEBI" id="CHEBI:58017"/>
    </ligand>
</feature>
<feature type="binding site" evidence="1">
    <location>
        <position position="194"/>
    </location>
    <ligand>
        <name>uracil</name>
        <dbReference type="ChEBI" id="CHEBI:17568"/>
    </ligand>
</feature>
<feature type="binding site" evidence="1">
    <location>
        <begin position="199"/>
        <end position="201"/>
    </location>
    <ligand>
        <name>uracil</name>
        <dbReference type="ChEBI" id="CHEBI:17568"/>
    </ligand>
</feature>
<feature type="binding site" evidence="1">
    <location>
        <position position="200"/>
    </location>
    <ligand>
        <name>5-phospho-alpha-D-ribose 1-diphosphate</name>
        <dbReference type="ChEBI" id="CHEBI:58017"/>
    </ligand>
</feature>
<organism>
    <name type="scientific">Listeria welshimeri serovar 6b (strain ATCC 35897 / DSM 20650 / CCUG 15529 / CIP 8149 / NCTC 11857 / SLCC 5334 / V8)</name>
    <dbReference type="NCBI Taxonomy" id="386043"/>
    <lineage>
        <taxon>Bacteria</taxon>
        <taxon>Bacillati</taxon>
        <taxon>Bacillota</taxon>
        <taxon>Bacilli</taxon>
        <taxon>Bacillales</taxon>
        <taxon>Listeriaceae</taxon>
        <taxon>Listeria</taxon>
    </lineage>
</organism>
<proteinExistence type="inferred from homology"/>
<name>UPP_LISW6</name>